<organism>
    <name type="scientific">Rhodopseudomonas palustris (strain HaA2)</name>
    <dbReference type="NCBI Taxonomy" id="316058"/>
    <lineage>
        <taxon>Bacteria</taxon>
        <taxon>Pseudomonadati</taxon>
        <taxon>Pseudomonadota</taxon>
        <taxon>Alphaproteobacteria</taxon>
        <taxon>Hyphomicrobiales</taxon>
        <taxon>Nitrobacteraceae</taxon>
        <taxon>Rhodopseudomonas</taxon>
    </lineage>
</organism>
<protein>
    <recommendedName>
        <fullName evidence="1">UPF0335 protein RPB_1426</fullName>
    </recommendedName>
</protein>
<evidence type="ECO:0000255" key="1">
    <source>
        <dbReference type="HAMAP-Rule" id="MF_00797"/>
    </source>
</evidence>
<accession>Q2J074</accession>
<proteinExistence type="inferred from homology"/>
<reference key="1">
    <citation type="submission" date="2006-01" db="EMBL/GenBank/DDBJ databases">
        <title>Complete sequence of Rhodopseudomonas palustris HaA2.</title>
        <authorList>
            <consortium name="US DOE Joint Genome Institute"/>
            <person name="Copeland A."/>
            <person name="Lucas S."/>
            <person name="Lapidus A."/>
            <person name="Barry K."/>
            <person name="Detter J.C."/>
            <person name="Glavina T."/>
            <person name="Hammon N."/>
            <person name="Israni S."/>
            <person name="Pitluck S."/>
            <person name="Chain P."/>
            <person name="Malfatti S."/>
            <person name="Shin M."/>
            <person name="Vergez L."/>
            <person name="Schmutz J."/>
            <person name="Larimer F."/>
            <person name="Land M."/>
            <person name="Hauser L."/>
            <person name="Pelletier D.A."/>
            <person name="Kyrpides N."/>
            <person name="Anderson I."/>
            <person name="Oda Y."/>
            <person name="Harwood C.S."/>
            <person name="Richardson P."/>
        </authorList>
    </citation>
    <scope>NUCLEOTIDE SEQUENCE [LARGE SCALE GENOMIC DNA]</scope>
    <source>
        <strain>HaA2</strain>
    </source>
</reference>
<gene>
    <name type="ordered locus">RPB_1426</name>
</gene>
<sequence length="90" mass="10234">MATSAAAVQDEPATKFAKDQLKAIIERIERLEEEKKTISDDIRDVYAEAKGNGYDVKALRTIVRMRKQDANERAEQETILETYMQALGML</sequence>
<keyword id="KW-1185">Reference proteome</keyword>
<comment type="similarity">
    <text evidence="1">Belongs to the UPF0335 family.</text>
</comment>
<dbReference type="EMBL" id="CP000250">
    <property type="protein sequence ID" value="ABD06136.1"/>
    <property type="molecule type" value="Genomic_DNA"/>
</dbReference>
<dbReference type="RefSeq" id="WP_011440324.1">
    <property type="nucleotide sequence ID" value="NC_007778.1"/>
</dbReference>
<dbReference type="SMR" id="Q2J074"/>
<dbReference type="STRING" id="316058.RPB_1426"/>
<dbReference type="KEGG" id="rpb:RPB_1426"/>
<dbReference type="eggNOG" id="COG3750">
    <property type="taxonomic scope" value="Bacteria"/>
</dbReference>
<dbReference type="HOGENOM" id="CLU_158651_2_0_5"/>
<dbReference type="OrthoDB" id="9813793at2"/>
<dbReference type="Proteomes" id="UP000008809">
    <property type="component" value="Chromosome"/>
</dbReference>
<dbReference type="GO" id="GO:0003677">
    <property type="term" value="F:DNA binding"/>
    <property type="evidence" value="ECO:0007669"/>
    <property type="project" value="InterPro"/>
</dbReference>
<dbReference type="HAMAP" id="MF_00797">
    <property type="entry name" value="UPF0335"/>
    <property type="match status" value="1"/>
</dbReference>
<dbReference type="InterPro" id="IPR018753">
    <property type="entry name" value="GapR-like"/>
</dbReference>
<dbReference type="InterPro" id="IPR046367">
    <property type="entry name" value="GapR-like_DNA-bd"/>
</dbReference>
<dbReference type="NCBIfam" id="NF010247">
    <property type="entry name" value="PRK13694.1"/>
    <property type="match status" value="1"/>
</dbReference>
<dbReference type="Pfam" id="PF10073">
    <property type="entry name" value="GapR_DNA-bd"/>
    <property type="match status" value="1"/>
</dbReference>
<feature type="chain" id="PRO_1000046964" description="UPF0335 protein RPB_1426">
    <location>
        <begin position="1"/>
        <end position="90"/>
    </location>
</feature>
<name>Y1426_RHOP2</name>